<dbReference type="EC" id="1.14.-.-"/>
<dbReference type="EMBL" id="AE014134">
    <property type="protein sequence ID" value="AAF52225.1"/>
    <property type="status" value="ALT_SEQ"/>
    <property type="molecule type" value="Genomic_DNA"/>
</dbReference>
<dbReference type="RefSeq" id="NP_608911.1">
    <property type="nucleotide sequence ID" value="NM_135067.3"/>
</dbReference>
<dbReference type="SMR" id="Q9VMT6"/>
<dbReference type="BioGRID" id="59919">
    <property type="interactions" value="4"/>
</dbReference>
<dbReference type="DIP" id="DIP-20831N"/>
<dbReference type="IntAct" id="Q9VMT6">
    <property type="interactions" value="1"/>
</dbReference>
<dbReference type="STRING" id="7227.FBpp0078697"/>
<dbReference type="PaxDb" id="7227-FBpp0078697"/>
<dbReference type="EnsemblMetazoa" id="FBtr0079061">
    <property type="protein sequence ID" value="FBpp0078697"/>
    <property type="gene ID" value="FBgn0031688"/>
</dbReference>
<dbReference type="GeneID" id="33748"/>
<dbReference type="KEGG" id="dme:Dmel_CG6081"/>
<dbReference type="UCSC" id="CG6081-RA">
    <property type="organism name" value="d. melanogaster"/>
</dbReference>
<dbReference type="AGR" id="FB:FBgn0031688"/>
<dbReference type="CTD" id="33748"/>
<dbReference type="FlyBase" id="FBgn0031688">
    <property type="gene designation" value="Cyp28d2"/>
</dbReference>
<dbReference type="VEuPathDB" id="VectorBase:FBgn0031688"/>
<dbReference type="eggNOG" id="KOG0158">
    <property type="taxonomic scope" value="Eukaryota"/>
</dbReference>
<dbReference type="GeneTree" id="ENSGT00940000167276"/>
<dbReference type="HOGENOM" id="CLU_001570_5_2_1"/>
<dbReference type="InParanoid" id="Q9VMT6"/>
<dbReference type="OMA" id="HIMLMLG"/>
<dbReference type="OrthoDB" id="2789670at2759"/>
<dbReference type="PhylomeDB" id="Q9VMT6"/>
<dbReference type="BioGRID-ORCS" id="33748">
    <property type="hits" value="0 hits in 1 CRISPR screen"/>
</dbReference>
<dbReference type="GenomeRNAi" id="33748"/>
<dbReference type="PRO" id="PR:Q9VMT6"/>
<dbReference type="Proteomes" id="UP000000803">
    <property type="component" value="Chromosome 2L"/>
</dbReference>
<dbReference type="Bgee" id="FBgn0031688">
    <property type="expression patterns" value="Expressed in adult midgut enterocyte in digestive tract and 44 other cell types or tissues"/>
</dbReference>
<dbReference type="ExpressionAtlas" id="Q9VMT6">
    <property type="expression patterns" value="baseline and differential"/>
</dbReference>
<dbReference type="GO" id="GO:0005789">
    <property type="term" value="C:endoplasmic reticulum membrane"/>
    <property type="evidence" value="ECO:0007669"/>
    <property type="project" value="UniProtKB-SubCell"/>
</dbReference>
<dbReference type="GO" id="GO:0020037">
    <property type="term" value="F:heme binding"/>
    <property type="evidence" value="ECO:0007669"/>
    <property type="project" value="InterPro"/>
</dbReference>
<dbReference type="GO" id="GO:0005506">
    <property type="term" value="F:iron ion binding"/>
    <property type="evidence" value="ECO:0007669"/>
    <property type="project" value="InterPro"/>
</dbReference>
<dbReference type="GO" id="GO:0004497">
    <property type="term" value="F:monooxygenase activity"/>
    <property type="evidence" value="ECO:0007669"/>
    <property type="project" value="UniProtKB-KW"/>
</dbReference>
<dbReference type="GO" id="GO:0016705">
    <property type="term" value="F:oxidoreductase activity, acting on paired donors, with incorporation or reduction of molecular oxygen"/>
    <property type="evidence" value="ECO:0007669"/>
    <property type="project" value="InterPro"/>
</dbReference>
<dbReference type="CDD" id="cd11056">
    <property type="entry name" value="CYP6-like"/>
    <property type="match status" value="1"/>
</dbReference>
<dbReference type="FunFam" id="1.10.630.10:FF:000182">
    <property type="entry name" value="Cytochrome P450 3A4"/>
    <property type="match status" value="1"/>
</dbReference>
<dbReference type="Gene3D" id="1.10.630.10">
    <property type="entry name" value="Cytochrome P450"/>
    <property type="match status" value="1"/>
</dbReference>
<dbReference type="InterPro" id="IPR001128">
    <property type="entry name" value="Cyt_P450"/>
</dbReference>
<dbReference type="InterPro" id="IPR017972">
    <property type="entry name" value="Cyt_P450_CS"/>
</dbReference>
<dbReference type="InterPro" id="IPR002403">
    <property type="entry name" value="Cyt_P450_E_grp-IV"/>
</dbReference>
<dbReference type="InterPro" id="IPR036396">
    <property type="entry name" value="Cyt_P450_sf"/>
</dbReference>
<dbReference type="InterPro" id="IPR050476">
    <property type="entry name" value="Insect_CytP450_Detox"/>
</dbReference>
<dbReference type="PANTHER" id="PTHR24292">
    <property type="entry name" value="CYTOCHROME P450"/>
    <property type="match status" value="1"/>
</dbReference>
<dbReference type="PANTHER" id="PTHR24292:SF84">
    <property type="entry name" value="CYTOCHROME P450 28A5-RELATED"/>
    <property type="match status" value="1"/>
</dbReference>
<dbReference type="Pfam" id="PF00067">
    <property type="entry name" value="p450"/>
    <property type="match status" value="1"/>
</dbReference>
<dbReference type="PRINTS" id="PR00465">
    <property type="entry name" value="EP450IV"/>
</dbReference>
<dbReference type="PRINTS" id="PR00385">
    <property type="entry name" value="P450"/>
</dbReference>
<dbReference type="SUPFAM" id="SSF48264">
    <property type="entry name" value="Cytochrome P450"/>
    <property type="match status" value="1"/>
</dbReference>
<dbReference type="PROSITE" id="PS00086">
    <property type="entry name" value="CYTOCHROME_P450"/>
    <property type="match status" value="1"/>
</dbReference>
<evidence type="ECO:0000250" key="1"/>
<evidence type="ECO:0000305" key="2"/>
<organism>
    <name type="scientific">Drosophila melanogaster</name>
    <name type="common">Fruit fly</name>
    <dbReference type="NCBI Taxonomy" id="7227"/>
    <lineage>
        <taxon>Eukaryota</taxon>
        <taxon>Metazoa</taxon>
        <taxon>Ecdysozoa</taxon>
        <taxon>Arthropoda</taxon>
        <taxon>Hexapoda</taxon>
        <taxon>Insecta</taxon>
        <taxon>Pterygota</taxon>
        <taxon>Neoptera</taxon>
        <taxon>Endopterygota</taxon>
        <taxon>Diptera</taxon>
        <taxon>Brachycera</taxon>
        <taxon>Muscomorpha</taxon>
        <taxon>Ephydroidea</taxon>
        <taxon>Drosophilidae</taxon>
        <taxon>Drosophila</taxon>
        <taxon>Sophophora</taxon>
    </lineage>
</organism>
<name>C28D2_DROME</name>
<protein>
    <recommendedName>
        <fullName>Probable cytochrome P450 28d2</fullName>
        <ecNumber>1.14.-.-</ecNumber>
    </recommendedName>
    <alternativeName>
        <fullName>CYPXXVIIID2</fullName>
    </alternativeName>
</protein>
<proteinExistence type="inferred from homology"/>
<accession>Q9VMT6</accession>
<comment type="function">
    <text evidence="1">May be involved in the metabolism of insect hormones and in the breakdown of synthetic insecticides.</text>
</comment>
<comment type="cofactor">
    <cofactor evidence="1">
        <name>heme</name>
        <dbReference type="ChEBI" id="CHEBI:30413"/>
    </cofactor>
</comment>
<comment type="subcellular location">
    <subcellularLocation>
        <location evidence="2">Endoplasmic reticulum membrane</location>
        <topology evidence="2">Peripheral membrane protein</topology>
    </subcellularLocation>
    <subcellularLocation>
        <location evidence="2">Microsome membrane</location>
        <topology evidence="2">Peripheral membrane protein</topology>
    </subcellularLocation>
</comment>
<comment type="similarity">
    <text evidence="2">Belongs to the cytochrome P450 family.</text>
</comment>
<comment type="sequence caution" evidence="2">
    <conflict type="erroneous gene model prediction">
        <sequence resource="EMBL-CDS" id="AAF52225"/>
    </conflict>
</comment>
<sequence>MCPVTTFLVLVLTLLVLVYVFLTWNFNYWRKRGIKTAPTWPFVGSFPSIFTRKRNIAYDIDDIYEKYKDTDNMVGVFTTRVPQLLVMCPEYIHKIYATDFRSFHNNEWRNFVNKKTDMILGNNPFVLTGDEWKERRSEIMPALSPNRVKAVYPVSQSVCKKFVEYIRRQQQMATSEGLDAMDLSLCYTTEVVSDCGLGVSAQSFTDTPTPLLKMIKRVFNTSFEFIFYSVVTNLWQKVRKFYSVPFFNKETEVFFLDIIRRCITLRLEKPEQQRDDFLNYMLQLQEKKGLHTDNILINTMTFILDGFETTALVLAHIMLMLGRNPEEQDKVRKEIGSADLTFDQMSELPHLDACIYETLRLFSPQVAARKLVTEPFEFANKNGRTVHLKPGDVVTIPVKALHHDPQYYEDPLTFKPERFLESNGGGMKSYRDRGVYLAFGDGPRHCPGMRFALTQLKAALVEILRNFEIKVNPKTRSDNQIDDTFFMATLKGGIYLDFKDL</sequence>
<feature type="chain" id="PRO_0000051991" description="Probable cytochrome P450 28d2">
    <location>
        <begin position="1"/>
        <end position="501"/>
    </location>
</feature>
<feature type="binding site" description="axial binding residue" evidence="1">
    <location>
        <position position="446"/>
    </location>
    <ligand>
        <name>heme</name>
        <dbReference type="ChEBI" id="CHEBI:30413"/>
    </ligand>
    <ligandPart>
        <name>Fe</name>
        <dbReference type="ChEBI" id="CHEBI:18248"/>
    </ligandPart>
</feature>
<reference key="1">
    <citation type="journal article" date="2000" name="Science">
        <title>The genome sequence of Drosophila melanogaster.</title>
        <authorList>
            <person name="Adams M.D."/>
            <person name="Celniker S.E."/>
            <person name="Holt R.A."/>
            <person name="Evans C.A."/>
            <person name="Gocayne J.D."/>
            <person name="Amanatides P.G."/>
            <person name="Scherer S.E."/>
            <person name="Li P.W."/>
            <person name="Hoskins R.A."/>
            <person name="Galle R.F."/>
            <person name="George R.A."/>
            <person name="Lewis S.E."/>
            <person name="Richards S."/>
            <person name="Ashburner M."/>
            <person name="Henderson S.N."/>
            <person name="Sutton G.G."/>
            <person name="Wortman J.R."/>
            <person name="Yandell M.D."/>
            <person name="Zhang Q."/>
            <person name="Chen L.X."/>
            <person name="Brandon R.C."/>
            <person name="Rogers Y.-H.C."/>
            <person name="Blazej R.G."/>
            <person name="Champe M."/>
            <person name="Pfeiffer B.D."/>
            <person name="Wan K.H."/>
            <person name="Doyle C."/>
            <person name="Baxter E.G."/>
            <person name="Helt G."/>
            <person name="Nelson C.R."/>
            <person name="Miklos G.L.G."/>
            <person name="Abril J.F."/>
            <person name="Agbayani A."/>
            <person name="An H.-J."/>
            <person name="Andrews-Pfannkoch C."/>
            <person name="Baldwin D."/>
            <person name="Ballew R.M."/>
            <person name="Basu A."/>
            <person name="Baxendale J."/>
            <person name="Bayraktaroglu L."/>
            <person name="Beasley E.M."/>
            <person name="Beeson K.Y."/>
            <person name="Benos P.V."/>
            <person name="Berman B.P."/>
            <person name="Bhandari D."/>
            <person name="Bolshakov S."/>
            <person name="Borkova D."/>
            <person name="Botchan M.R."/>
            <person name="Bouck J."/>
            <person name="Brokstein P."/>
            <person name="Brottier P."/>
            <person name="Burtis K.C."/>
            <person name="Busam D.A."/>
            <person name="Butler H."/>
            <person name="Cadieu E."/>
            <person name="Center A."/>
            <person name="Chandra I."/>
            <person name="Cherry J.M."/>
            <person name="Cawley S."/>
            <person name="Dahlke C."/>
            <person name="Davenport L.B."/>
            <person name="Davies P."/>
            <person name="de Pablos B."/>
            <person name="Delcher A."/>
            <person name="Deng Z."/>
            <person name="Mays A.D."/>
            <person name="Dew I."/>
            <person name="Dietz S.M."/>
            <person name="Dodson K."/>
            <person name="Doup L.E."/>
            <person name="Downes M."/>
            <person name="Dugan-Rocha S."/>
            <person name="Dunkov B.C."/>
            <person name="Dunn P."/>
            <person name="Durbin K.J."/>
            <person name="Evangelista C.C."/>
            <person name="Ferraz C."/>
            <person name="Ferriera S."/>
            <person name="Fleischmann W."/>
            <person name="Fosler C."/>
            <person name="Gabrielian A.E."/>
            <person name="Garg N.S."/>
            <person name="Gelbart W.M."/>
            <person name="Glasser K."/>
            <person name="Glodek A."/>
            <person name="Gong F."/>
            <person name="Gorrell J.H."/>
            <person name="Gu Z."/>
            <person name="Guan P."/>
            <person name="Harris M."/>
            <person name="Harris N.L."/>
            <person name="Harvey D.A."/>
            <person name="Heiman T.J."/>
            <person name="Hernandez J.R."/>
            <person name="Houck J."/>
            <person name="Hostin D."/>
            <person name="Houston K.A."/>
            <person name="Howland T.J."/>
            <person name="Wei M.-H."/>
            <person name="Ibegwam C."/>
            <person name="Jalali M."/>
            <person name="Kalush F."/>
            <person name="Karpen G.H."/>
            <person name="Ke Z."/>
            <person name="Kennison J.A."/>
            <person name="Ketchum K.A."/>
            <person name="Kimmel B.E."/>
            <person name="Kodira C.D."/>
            <person name="Kraft C.L."/>
            <person name="Kravitz S."/>
            <person name="Kulp D."/>
            <person name="Lai Z."/>
            <person name="Lasko P."/>
            <person name="Lei Y."/>
            <person name="Levitsky A.A."/>
            <person name="Li J.H."/>
            <person name="Li Z."/>
            <person name="Liang Y."/>
            <person name="Lin X."/>
            <person name="Liu X."/>
            <person name="Mattei B."/>
            <person name="McIntosh T.C."/>
            <person name="McLeod M.P."/>
            <person name="McPherson D."/>
            <person name="Merkulov G."/>
            <person name="Milshina N.V."/>
            <person name="Mobarry C."/>
            <person name="Morris J."/>
            <person name="Moshrefi A."/>
            <person name="Mount S.M."/>
            <person name="Moy M."/>
            <person name="Murphy B."/>
            <person name="Murphy L."/>
            <person name="Muzny D.M."/>
            <person name="Nelson D.L."/>
            <person name="Nelson D.R."/>
            <person name="Nelson K.A."/>
            <person name="Nixon K."/>
            <person name="Nusskern D.R."/>
            <person name="Pacleb J.M."/>
            <person name="Palazzolo M."/>
            <person name="Pittman G.S."/>
            <person name="Pan S."/>
            <person name="Pollard J."/>
            <person name="Puri V."/>
            <person name="Reese M.G."/>
            <person name="Reinert K."/>
            <person name="Remington K."/>
            <person name="Saunders R.D.C."/>
            <person name="Scheeler F."/>
            <person name="Shen H."/>
            <person name="Shue B.C."/>
            <person name="Siden-Kiamos I."/>
            <person name="Simpson M."/>
            <person name="Skupski M.P."/>
            <person name="Smith T.J."/>
            <person name="Spier E."/>
            <person name="Spradling A.C."/>
            <person name="Stapleton M."/>
            <person name="Strong R."/>
            <person name="Sun E."/>
            <person name="Svirskas R."/>
            <person name="Tector C."/>
            <person name="Turner R."/>
            <person name="Venter E."/>
            <person name="Wang A.H."/>
            <person name="Wang X."/>
            <person name="Wang Z.-Y."/>
            <person name="Wassarman D.A."/>
            <person name="Weinstock G.M."/>
            <person name="Weissenbach J."/>
            <person name="Williams S.M."/>
            <person name="Woodage T."/>
            <person name="Worley K.C."/>
            <person name="Wu D."/>
            <person name="Yang S."/>
            <person name="Yao Q.A."/>
            <person name="Ye J."/>
            <person name="Yeh R.-F."/>
            <person name="Zaveri J.S."/>
            <person name="Zhan M."/>
            <person name="Zhang G."/>
            <person name="Zhao Q."/>
            <person name="Zheng L."/>
            <person name="Zheng X.H."/>
            <person name="Zhong F.N."/>
            <person name="Zhong W."/>
            <person name="Zhou X."/>
            <person name="Zhu S.C."/>
            <person name="Zhu X."/>
            <person name="Smith H.O."/>
            <person name="Gibbs R.A."/>
            <person name="Myers E.W."/>
            <person name="Rubin G.M."/>
            <person name="Venter J.C."/>
        </authorList>
    </citation>
    <scope>NUCLEOTIDE SEQUENCE [LARGE SCALE GENOMIC DNA]</scope>
    <source>
        <strain>Berkeley</strain>
    </source>
</reference>
<reference key="2">
    <citation type="journal article" date="2002" name="Genome Biol.">
        <title>Annotation of the Drosophila melanogaster euchromatic genome: a systematic review.</title>
        <authorList>
            <person name="Misra S."/>
            <person name="Crosby M.A."/>
            <person name="Mungall C.J."/>
            <person name="Matthews B.B."/>
            <person name="Campbell K.S."/>
            <person name="Hradecky P."/>
            <person name="Huang Y."/>
            <person name="Kaminker J.S."/>
            <person name="Millburn G.H."/>
            <person name="Prochnik S.E."/>
            <person name="Smith C.D."/>
            <person name="Tupy J.L."/>
            <person name="Whitfield E.J."/>
            <person name="Bayraktaroglu L."/>
            <person name="Berman B.P."/>
            <person name="Bettencourt B.R."/>
            <person name="Celniker S.E."/>
            <person name="de Grey A.D.N.J."/>
            <person name="Drysdale R.A."/>
            <person name="Harris N.L."/>
            <person name="Richter J."/>
            <person name="Russo S."/>
            <person name="Schroeder A.J."/>
            <person name="Shu S.Q."/>
            <person name="Stapleton M."/>
            <person name="Yamada C."/>
            <person name="Ashburner M."/>
            <person name="Gelbart W.M."/>
            <person name="Rubin G.M."/>
            <person name="Lewis S.E."/>
        </authorList>
    </citation>
    <scope>GENOME REANNOTATION</scope>
    <source>
        <strain>Berkeley</strain>
    </source>
</reference>
<reference key="3">
    <citation type="unpublished observations" date="2000-09">
        <authorList>
            <person name="Nelson B."/>
        </authorList>
    </citation>
    <scope>CONCEPTUAL TRANSLATION</scope>
</reference>
<keyword id="KW-0256">Endoplasmic reticulum</keyword>
<keyword id="KW-0349">Heme</keyword>
<keyword id="KW-0408">Iron</keyword>
<keyword id="KW-0472">Membrane</keyword>
<keyword id="KW-0479">Metal-binding</keyword>
<keyword id="KW-0492">Microsome</keyword>
<keyword id="KW-0503">Monooxygenase</keyword>
<keyword id="KW-0560">Oxidoreductase</keyword>
<keyword id="KW-1185">Reference proteome</keyword>
<gene>
    <name type="primary">Cyp28d2</name>
    <name type="ORF">CG6081</name>
</gene>